<gene>
    <name evidence="1" type="primary">matK</name>
</gene>
<organism>
    <name type="scientific">Pinus coulteri</name>
    <name type="common">Coulter pine</name>
    <name type="synonym">Pinus ponderosa subsp. coulteri</name>
    <dbReference type="NCBI Taxonomy" id="3351"/>
    <lineage>
        <taxon>Eukaryota</taxon>
        <taxon>Viridiplantae</taxon>
        <taxon>Streptophyta</taxon>
        <taxon>Embryophyta</taxon>
        <taxon>Tracheophyta</taxon>
        <taxon>Spermatophyta</taxon>
        <taxon>Pinopsida</taxon>
        <taxon>Pinidae</taxon>
        <taxon>Conifers I</taxon>
        <taxon>Pinales</taxon>
        <taxon>Pinaceae</taxon>
        <taxon>Pinus</taxon>
        <taxon>Pinus subgen. Pinus</taxon>
    </lineage>
</organism>
<dbReference type="EMBL" id="AB097785">
    <property type="protein sequence ID" value="BAC77428.1"/>
    <property type="molecule type" value="Genomic_DNA"/>
</dbReference>
<dbReference type="GO" id="GO:0009507">
    <property type="term" value="C:chloroplast"/>
    <property type="evidence" value="ECO:0007669"/>
    <property type="project" value="UniProtKB-SubCell"/>
</dbReference>
<dbReference type="GO" id="GO:0003723">
    <property type="term" value="F:RNA binding"/>
    <property type="evidence" value="ECO:0007669"/>
    <property type="project" value="UniProtKB-KW"/>
</dbReference>
<dbReference type="GO" id="GO:0006397">
    <property type="term" value="P:mRNA processing"/>
    <property type="evidence" value="ECO:0007669"/>
    <property type="project" value="UniProtKB-KW"/>
</dbReference>
<dbReference type="GO" id="GO:0008380">
    <property type="term" value="P:RNA splicing"/>
    <property type="evidence" value="ECO:0007669"/>
    <property type="project" value="UniProtKB-UniRule"/>
</dbReference>
<dbReference type="GO" id="GO:0008033">
    <property type="term" value="P:tRNA processing"/>
    <property type="evidence" value="ECO:0007669"/>
    <property type="project" value="UniProtKB-KW"/>
</dbReference>
<dbReference type="HAMAP" id="MF_01390">
    <property type="entry name" value="MatK"/>
    <property type="match status" value="1"/>
</dbReference>
<dbReference type="InterPro" id="IPR024937">
    <property type="entry name" value="Domain_X"/>
</dbReference>
<dbReference type="InterPro" id="IPR002866">
    <property type="entry name" value="Maturase_MatK"/>
</dbReference>
<dbReference type="InterPro" id="IPR024942">
    <property type="entry name" value="Maturase_MatK_N"/>
</dbReference>
<dbReference type="PANTHER" id="PTHR34811">
    <property type="entry name" value="MATURASE K"/>
    <property type="match status" value="1"/>
</dbReference>
<dbReference type="PANTHER" id="PTHR34811:SF1">
    <property type="entry name" value="MATURASE K"/>
    <property type="match status" value="1"/>
</dbReference>
<dbReference type="Pfam" id="PF01348">
    <property type="entry name" value="Intron_maturas2"/>
    <property type="match status" value="1"/>
</dbReference>
<dbReference type="Pfam" id="PF01824">
    <property type="entry name" value="MatK_N"/>
    <property type="match status" value="1"/>
</dbReference>
<name>MATK_PINCU</name>
<feature type="chain" id="PRO_0000143609" description="Maturase K">
    <location>
        <begin position="1"/>
        <end position="515"/>
    </location>
</feature>
<protein>
    <recommendedName>
        <fullName evidence="1">Maturase K</fullName>
    </recommendedName>
    <alternativeName>
        <fullName evidence="1">Intron maturase</fullName>
    </alternativeName>
</protein>
<accession>Q7YMF8</accession>
<keyword id="KW-0150">Chloroplast</keyword>
<keyword id="KW-0507">mRNA processing</keyword>
<keyword id="KW-0934">Plastid</keyword>
<keyword id="KW-0694">RNA-binding</keyword>
<keyword id="KW-0819">tRNA processing</keyword>
<sequence>MDEFHRCGKEDSFWQQCFLYPLFFQEDLYAISHDHYLDVSSSSRPMEHLSSNDQLSFLTVKRLIGQIRQQNHSIVLFVNCDPNPLADRKKSFYSESVLEALTLVLEVPFSIWSKYSVEGMNESKSFRSIHSIFPFLEDKFPHSNSILDARIPYSIHPEILVRTFRRWIRDAPSLHPLRSVLYEYRNSPDNLQRSIIVVPRVNTRFFLFLWNYYVCECESILFSRLKRSSHSRSLSHGSFPQRTHFHRKIKHIIIFSRRNSLKSIWSLKDPKIHYVRYGERPIIAIKGAHLLVKKCRYYLLIFRQFYFHLWSEPYRVCSHQLSKNCSSSPGYFLRVRMNPILVRTKMLDELFIADLITDEIDPIVPIVPIIGLLATEKFCDISGRPISKLSWTSLTDDDILDRFDQIWRNLFHYYSGSFDRDGLYRIKYILSLSCAKTLACKHKSTIRVVRKELGPELFKKSFSKEREFYSLRFSSKAAARSQRERIWHSDIPQINPLANSWQKIQDLKIENLFDQ</sequence>
<reference key="1">
    <citation type="submission" date="2002-12" db="EMBL/GenBank/DDBJ databases">
        <title>Evolutionary relationships in pines.</title>
        <authorList>
            <person name="Geada-Lopez G."/>
            <person name="Harada K."/>
        </authorList>
    </citation>
    <scope>NUCLEOTIDE SEQUENCE [GENOMIC DNA]</scope>
</reference>
<proteinExistence type="inferred from homology"/>
<evidence type="ECO:0000255" key="1">
    <source>
        <dbReference type="HAMAP-Rule" id="MF_01390"/>
    </source>
</evidence>
<comment type="function">
    <text evidence="1">Usually encoded in the trnK tRNA gene intron. Probably assists in splicing its own and other chloroplast group II introns.</text>
</comment>
<comment type="subcellular location">
    <subcellularLocation>
        <location>Plastid</location>
        <location>Chloroplast</location>
    </subcellularLocation>
</comment>
<comment type="similarity">
    <text evidence="1">Belongs to the intron maturase 2 family. MatK subfamily.</text>
</comment>
<geneLocation type="chloroplast"/>